<proteinExistence type="inferred from homology"/>
<evidence type="ECO:0000255" key="1">
    <source>
        <dbReference type="HAMAP-Rule" id="MF_01033"/>
    </source>
</evidence>
<keyword id="KW-0028">Amino-acid biosynthesis</keyword>
<keyword id="KW-0100">Branched-chain amino acid biosynthesis</keyword>
<keyword id="KW-0963">Cytoplasm</keyword>
<keyword id="KW-0432">Leucine biosynthesis</keyword>
<keyword id="KW-0460">Magnesium</keyword>
<keyword id="KW-0464">Manganese</keyword>
<keyword id="KW-0479">Metal-binding</keyword>
<keyword id="KW-0520">NAD</keyword>
<keyword id="KW-0560">Oxidoreductase</keyword>
<keyword id="KW-1185">Reference proteome</keyword>
<feature type="chain" id="PRO_0000083635" description="3-isopropylmalate dehydrogenase">
    <location>
        <begin position="1"/>
        <end position="354"/>
    </location>
</feature>
<feature type="binding site" evidence="1">
    <location>
        <begin position="76"/>
        <end position="87"/>
    </location>
    <ligand>
        <name>NAD(+)</name>
        <dbReference type="ChEBI" id="CHEBI:57540"/>
    </ligand>
</feature>
<feature type="binding site" evidence="1">
    <location>
        <position position="94"/>
    </location>
    <ligand>
        <name>substrate</name>
    </ligand>
</feature>
<feature type="binding site" evidence="1">
    <location>
        <position position="104"/>
    </location>
    <ligand>
        <name>substrate</name>
    </ligand>
</feature>
<feature type="binding site" evidence="1">
    <location>
        <position position="130"/>
    </location>
    <ligand>
        <name>substrate</name>
    </ligand>
</feature>
<feature type="binding site" evidence="1">
    <location>
        <position position="215"/>
    </location>
    <ligand>
        <name>Mg(2+)</name>
        <dbReference type="ChEBI" id="CHEBI:18420"/>
    </ligand>
</feature>
<feature type="binding site" evidence="1">
    <location>
        <position position="215"/>
    </location>
    <ligand>
        <name>substrate</name>
    </ligand>
</feature>
<feature type="binding site" evidence="1">
    <location>
        <position position="239"/>
    </location>
    <ligand>
        <name>Mg(2+)</name>
        <dbReference type="ChEBI" id="CHEBI:18420"/>
    </ligand>
</feature>
<feature type="binding site" evidence="1">
    <location>
        <position position="243"/>
    </location>
    <ligand>
        <name>Mg(2+)</name>
        <dbReference type="ChEBI" id="CHEBI:18420"/>
    </ligand>
</feature>
<feature type="binding site" evidence="1">
    <location>
        <begin position="273"/>
        <end position="285"/>
    </location>
    <ligand>
        <name>NAD(+)</name>
        <dbReference type="ChEBI" id="CHEBI:57540"/>
    </ligand>
</feature>
<feature type="site" description="Important for catalysis" evidence="1">
    <location>
        <position position="137"/>
    </location>
</feature>
<feature type="site" description="Important for catalysis" evidence="1">
    <location>
        <position position="183"/>
    </location>
</feature>
<comment type="function">
    <text evidence="1">Catalyzes the oxidation of 3-carboxy-2-hydroxy-4-methylpentanoate (3-isopropylmalate) to 3-carboxy-4-methyl-2-oxopentanoate. The product decarboxylates to 4-methyl-2 oxopentanoate.</text>
</comment>
<comment type="catalytic activity">
    <reaction evidence="1">
        <text>(2R,3S)-3-isopropylmalate + NAD(+) = 4-methyl-2-oxopentanoate + CO2 + NADH</text>
        <dbReference type="Rhea" id="RHEA:32271"/>
        <dbReference type="ChEBI" id="CHEBI:16526"/>
        <dbReference type="ChEBI" id="CHEBI:17865"/>
        <dbReference type="ChEBI" id="CHEBI:35121"/>
        <dbReference type="ChEBI" id="CHEBI:57540"/>
        <dbReference type="ChEBI" id="CHEBI:57945"/>
        <dbReference type="EC" id="1.1.1.85"/>
    </reaction>
</comment>
<comment type="cofactor">
    <cofactor evidence="1">
        <name>Mg(2+)</name>
        <dbReference type="ChEBI" id="CHEBI:18420"/>
    </cofactor>
    <cofactor evidence="1">
        <name>Mn(2+)</name>
        <dbReference type="ChEBI" id="CHEBI:29035"/>
    </cofactor>
    <text evidence="1">Binds 1 Mg(2+) or Mn(2+) ion per subunit.</text>
</comment>
<comment type="pathway">
    <text evidence="1">Amino-acid biosynthesis; L-leucine biosynthesis; L-leucine from 3-methyl-2-oxobutanoate: step 3/4.</text>
</comment>
<comment type="subunit">
    <text evidence="1">Homodimer.</text>
</comment>
<comment type="subcellular location">
    <subcellularLocation>
        <location evidence="1">Cytoplasm</location>
    </subcellularLocation>
</comment>
<comment type="similarity">
    <text evidence="1">Belongs to the isocitrate and isopropylmalate dehydrogenases family. LeuB type 1 subfamily.</text>
</comment>
<name>LEU3_BACCR</name>
<gene>
    <name evidence="1" type="primary">leuB</name>
    <name type="ordered locus">BC_1401</name>
</gene>
<accession>Q81G11</accession>
<sequence>MEKRIVCLAGDGVGPEVMESAKEVLHMVERLYGHHFHLQDEYFGGVAIDLTGQPLPQRTLAACLASDAVLLGAVGGPRWDSAKERPEKGLLALRKGLGVFANVRPVTVESATAHLSPLKNADEIDFVVVRELTGGIYFSYPKERTEEVATDTLTYHRHEIERIVSYAFQLANKRKKKVTSIDKANVLESSKLWRTVTEEVALRYPNVEVEHILVDAAAMELIRNPGRFDVIVTENLFGDILSDEASVLAGSLGMLPSASHAEKGPSLYEPIHGSAPDIAGKNKANPIAMMRSVAMMLGQSFGLTREGYAIEEAVSAVLKSGKCTADIGGTETTTSFTKAVIQEMEEQALVGRGR</sequence>
<organism>
    <name type="scientific">Bacillus cereus (strain ATCC 14579 / DSM 31 / CCUG 7414 / JCM 2152 / NBRC 15305 / NCIMB 9373 / NCTC 2599 / NRRL B-3711)</name>
    <dbReference type="NCBI Taxonomy" id="226900"/>
    <lineage>
        <taxon>Bacteria</taxon>
        <taxon>Bacillati</taxon>
        <taxon>Bacillota</taxon>
        <taxon>Bacilli</taxon>
        <taxon>Bacillales</taxon>
        <taxon>Bacillaceae</taxon>
        <taxon>Bacillus</taxon>
        <taxon>Bacillus cereus group</taxon>
    </lineage>
</organism>
<protein>
    <recommendedName>
        <fullName evidence="1">3-isopropylmalate dehydrogenase</fullName>
        <ecNumber evidence="1">1.1.1.85</ecNumber>
    </recommendedName>
    <alternativeName>
        <fullName evidence="1">3-IPM-DH</fullName>
    </alternativeName>
    <alternativeName>
        <fullName evidence="1">Beta-IPM dehydrogenase</fullName>
        <shortName evidence="1">IMDH</shortName>
    </alternativeName>
</protein>
<reference key="1">
    <citation type="journal article" date="2003" name="Nature">
        <title>Genome sequence of Bacillus cereus and comparative analysis with Bacillus anthracis.</title>
        <authorList>
            <person name="Ivanova N."/>
            <person name="Sorokin A."/>
            <person name="Anderson I."/>
            <person name="Galleron N."/>
            <person name="Candelon B."/>
            <person name="Kapatral V."/>
            <person name="Bhattacharyya A."/>
            <person name="Reznik G."/>
            <person name="Mikhailova N."/>
            <person name="Lapidus A."/>
            <person name="Chu L."/>
            <person name="Mazur M."/>
            <person name="Goltsman E."/>
            <person name="Larsen N."/>
            <person name="D'Souza M."/>
            <person name="Walunas T."/>
            <person name="Grechkin Y."/>
            <person name="Pusch G."/>
            <person name="Haselkorn R."/>
            <person name="Fonstein M."/>
            <person name="Ehrlich S.D."/>
            <person name="Overbeek R."/>
            <person name="Kyrpides N.C."/>
        </authorList>
    </citation>
    <scope>NUCLEOTIDE SEQUENCE [LARGE SCALE GENOMIC DNA]</scope>
    <source>
        <strain>ATCC 14579 / DSM 31 / CCUG 7414 / JCM 2152 / NBRC 15305 / NCIMB 9373 / NCTC 2599 / NRRL B-3711</strain>
    </source>
</reference>
<dbReference type="EC" id="1.1.1.85" evidence="1"/>
<dbReference type="EMBL" id="AE016877">
    <property type="protein sequence ID" value="AAP08382.1"/>
    <property type="molecule type" value="Genomic_DNA"/>
</dbReference>
<dbReference type="RefSeq" id="NP_831181.1">
    <property type="nucleotide sequence ID" value="NC_004722.1"/>
</dbReference>
<dbReference type="RefSeq" id="WP_000415384.1">
    <property type="nucleotide sequence ID" value="NZ_CP138336.1"/>
</dbReference>
<dbReference type="SMR" id="Q81G11"/>
<dbReference type="STRING" id="226900.BC_1401"/>
<dbReference type="KEGG" id="bce:BC1401"/>
<dbReference type="PATRIC" id="fig|226900.8.peg.1378"/>
<dbReference type="HOGENOM" id="CLU_031953_0_3_9"/>
<dbReference type="OrthoDB" id="9806254at2"/>
<dbReference type="UniPathway" id="UPA00048">
    <property type="reaction ID" value="UER00072"/>
</dbReference>
<dbReference type="Proteomes" id="UP000001417">
    <property type="component" value="Chromosome"/>
</dbReference>
<dbReference type="GO" id="GO:0005829">
    <property type="term" value="C:cytosol"/>
    <property type="evidence" value="ECO:0000318"/>
    <property type="project" value="GO_Central"/>
</dbReference>
<dbReference type="GO" id="GO:0003862">
    <property type="term" value="F:3-isopropylmalate dehydrogenase activity"/>
    <property type="evidence" value="ECO:0000318"/>
    <property type="project" value="GO_Central"/>
</dbReference>
<dbReference type="GO" id="GO:0000287">
    <property type="term" value="F:magnesium ion binding"/>
    <property type="evidence" value="ECO:0007669"/>
    <property type="project" value="InterPro"/>
</dbReference>
<dbReference type="GO" id="GO:0051287">
    <property type="term" value="F:NAD binding"/>
    <property type="evidence" value="ECO:0007669"/>
    <property type="project" value="InterPro"/>
</dbReference>
<dbReference type="GO" id="GO:0009098">
    <property type="term" value="P:L-leucine biosynthetic process"/>
    <property type="evidence" value="ECO:0000318"/>
    <property type="project" value="GO_Central"/>
</dbReference>
<dbReference type="FunFam" id="3.40.718.10:FF:000006">
    <property type="entry name" value="3-isopropylmalate dehydrogenase"/>
    <property type="match status" value="1"/>
</dbReference>
<dbReference type="Gene3D" id="3.40.718.10">
    <property type="entry name" value="Isopropylmalate Dehydrogenase"/>
    <property type="match status" value="1"/>
</dbReference>
<dbReference type="HAMAP" id="MF_01033">
    <property type="entry name" value="LeuB_type1"/>
    <property type="match status" value="1"/>
</dbReference>
<dbReference type="InterPro" id="IPR019818">
    <property type="entry name" value="IsoCit/isopropylmalate_DH_CS"/>
</dbReference>
<dbReference type="InterPro" id="IPR024084">
    <property type="entry name" value="IsoPropMal-DH-like_dom"/>
</dbReference>
<dbReference type="InterPro" id="IPR004429">
    <property type="entry name" value="Isopropylmalate_DH"/>
</dbReference>
<dbReference type="NCBIfam" id="TIGR00169">
    <property type="entry name" value="leuB"/>
    <property type="match status" value="1"/>
</dbReference>
<dbReference type="PANTHER" id="PTHR42979">
    <property type="entry name" value="3-ISOPROPYLMALATE DEHYDROGENASE"/>
    <property type="match status" value="1"/>
</dbReference>
<dbReference type="PANTHER" id="PTHR42979:SF1">
    <property type="entry name" value="3-ISOPROPYLMALATE DEHYDROGENASE"/>
    <property type="match status" value="1"/>
</dbReference>
<dbReference type="Pfam" id="PF00180">
    <property type="entry name" value="Iso_dh"/>
    <property type="match status" value="1"/>
</dbReference>
<dbReference type="SMART" id="SM01329">
    <property type="entry name" value="Iso_dh"/>
    <property type="match status" value="1"/>
</dbReference>
<dbReference type="SUPFAM" id="SSF53659">
    <property type="entry name" value="Isocitrate/Isopropylmalate dehydrogenase-like"/>
    <property type="match status" value="1"/>
</dbReference>
<dbReference type="PROSITE" id="PS00470">
    <property type="entry name" value="IDH_IMDH"/>
    <property type="match status" value="1"/>
</dbReference>